<reference key="1">
    <citation type="journal article" date="1994" name="Plant Physiol.">
        <title>Ribosomal protein S11 genes from Arabidopsis and soybean.</title>
        <authorList>
            <person name="Lenvik T.R."/>
            <person name="Key J.L."/>
            <person name="Gantt J.S."/>
        </authorList>
    </citation>
    <scope>NUCLEOTIDE SEQUENCE [GENOMIC DNA]</scope>
</reference>
<reference key="2">
    <citation type="journal article" date="1990" name="J. Biol. Chem.">
        <title>Plant cytosolic ribosomal protein S11 and chloroplast ribosomal protein CS17. Their primary structures and evolutionary relationships.</title>
        <authorList>
            <person name="Gantt J.S."/>
            <person name="Thompson M.D."/>
        </authorList>
    </citation>
    <scope>NUCLEOTIDE SEQUENCE [MRNA] OF 19-159</scope>
</reference>
<proteinExistence type="evidence at transcript level"/>
<feature type="chain" id="PRO_0000128521" description="Small ribosomal subunit protein uS17">
    <location>
        <begin position="1"/>
        <end position="159"/>
    </location>
</feature>
<dbReference type="EMBL" id="L28831">
    <property type="protein sequence ID" value="AAC14469.1"/>
    <property type="molecule type" value="Genomic_DNA"/>
</dbReference>
<dbReference type="EMBL" id="M31024">
    <property type="protein sequence ID" value="AAA34006.1"/>
    <property type="molecule type" value="mRNA"/>
</dbReference>
<dbReference type="PIR" id="D35542">
    <property type="entry name" value="D35542"/>
</dbReference>
<dbReference type="RefSeq" id="NP_001236968.1">
    <property type="nucleotide sequence ID" value="NM_001250039.1"/>
</dbReference>
<dbReference type="SMR" id="P17093"/>
<dbReference type="FunCoup" id="P17093">
    <property type="interactions" value="5558"/>
</dbReference>
<dbReference type="STRING" id="3847.P17093"/>
<dbReference type="PaxDb" id="3847-GLYMA13G23400.1"/>
<dbReference type="EnsemblPlants" id="KRH20240">
    <property type="protein sequence ID" value="KRH20240"/>
    <property type="gene ID" value="GLYMA_13G165200"/>
</dbReference>
<dbReference type="GeneID" id="547984"/>
<dbReference type="Gramene" id="KRH20240">
    <property type="protein sequence ID" value="KRH20240"/>
    <property type="gene ID" value="GLYMA_13G165200"/>
</dbReference>
<dbReference type="KEGG" id="gmx:547984"/>
<dbReference type="eggNOG" id="KOG1728">
    <property type="taxonomic scope" value="Eukaryota"/>
</dbReference>
<dbReference type="HOGENOM" id="CLU_073626_0_2_1"/>
<dbReference type="InParanoid" id="P17093"/>
<dbReference type="OMA" id="KVGECWP"/>
<dbReference type="OrthoDB" id="1885112at2759"/>
<dbReference type="Proteomes" id="UP000008827">
    <property type="component" value="Chromosome 13"/>
</dbReference>
<dbReference type="GO" id="GO:0022627">
    <property type="term" value="C:cytosolic small ribosomal subunit"/>
    <property type="evidence" value="ECO:0000318"/>
    <property type="project" value="GO_Central"/>
</dbReference>
<dbReference type="GO" id="GO:0019843">
    <property type="term" value="F:rRNA binding"/>
    <property type="evidence" value="ECO:0007669"/>
    <property type="project" value="UniProtKB-KW"/>
</dbReference>
<dbReference type="GO" id="GO:0003735">
    <property type="term" value="F:structural constituent of ribosome"/>
    <property type="evidence" value="ECO:0000318"/>
    <property type="project" value="GO_Central"/>
</dbReference>
<dbReference type="GO" id="GO:0006412">
    <property type="term" value="P:translation"/>
    <property type="evidence" value="ECO:0007669"/>
    <property type="project" value="InterPro"/>
</dbReference>
<dbReference type="CDD" id="cd00364">
    <property type="entry name" value="Ribosomal_uS17"/>
    <property type="match status" value="1"/>
</dbReference>
<dbReference type="FunFam" id="2.40.50.1000:FF:000003">
    <property type="entry name" value="40S ribosomal protein S11"/>
    <property type="match status" value="1"/>
</dbReference>
<dbReference type="Gene3D" id="2.40.50.1000">
    <property type="match status" value="1"/>
</dbReference>
<dbReference type="InterPro" id="IPR012340">
    <property type="entry name" value="NA-bd_OB-fold"/>
</dbReference>
<dbReference type="InterPro" id="IPR000266">
    <property type="entry name" value="Ribosomal_uS17"/>
</dbReference>
<dbReference type="InterPro" id="IPR028333">
    <property type="entry name" value="Ribosomal_uS17_arc/euk"/>
</dbReference>
<dbReference type="InterPro" id="IPR019979">
    <property type="entry name" value="Ribosomal_uS17_CS"/>
</dbReference>
<dbReference type="InterPro" id="IPR032440">
    <property type="entry name" value="Ribosomal_uS17_N"/>
</dbReference>
<dbReference type="NCBIfam" id="TIGR03630">
    <property type="entry name" value="uS17_arch"/>
    <property type="match status" value="1"/>
</dbReference>
<dbReference type="PANTHER" id="PTHR10744">
    <property type="entry name" value="40S RIBOSOMAL PROTEIN S11 FAMILY MEMBER"/>
    <property type="match status" value="1"/>
</dbReference>
<dbReference type="PANTHER" id="PTHR10744:SF47">
    <property type="entry name" value="SMALL RIBOSOMAL SUBUNIT PROTEIN US17X-RELATED"/>
    <property type="match status" value="1"/>
</dbReference>
<dbReference type="Pfam" id="PF00366">
    <property type="entry name" value="Ribosomal_S17"/>
    <property type="match status" value="1"/>
</dbReference>
<dbReference type="Pfam" id="PF16205">
    <property type="entry name" value="Ribosomal_S17_N"/>
    <property type="match status" value="1"/>
</dbReference>
<dbReference type="PRINTS" id="PR00973">
    <property type="entry name" value="RIBOSOMALS17"/>
</dbReference>
<dbReference type="SUPFAM" id="SSF50249">
    <property type="entry name" value="Nucleic acid-binding proteins"/>
    <property type="match status" value="1"/>
</dbReference>
<dbReference type="PROSITE" id="PS00056">
    <property type="entry name" value="RIBOSOMAL_S17"/>
    <property type="match status" value="1"/>
</dbReference>
<accession>P17093</accession>
<organism>
    <name type="scientific">Glycine max</name>
    <name type="common">Soybean</name>
    <name type="synonym">Glycine hispida</name>
    <dbReference type="NCBI Taxonomy" id="3847"/>
    <lineage>
        <taxon>Eukaryota</taxon>
        <taxon>Viridiplantae</taxon>
        <taxon>Streptophyta</taxon>
        <taxon>Embryophyta</taxon>
        <taxon>Tracheophyta</taxon>
        <taxon>Spermatophyta</taxon>
        <taxon>Magnoliopsida</taxon>
        <taxon>eudicotyledons</taxon>
        <taxon>Gunneridae</taxon>
        <taxon>Pentapetalae</taxon>
        <taxon>rosids</taxon>
        <taxon>fabids</taxon>
        <taxon>Fabales</taxon>
        <taxon>Fabaceae</taxon>
        <taxon>Papilionoideae</taxon>
        <taxon>50 kb inversion clade</taxon>
        <taxon>NPAAA clade</taxon>
        <taxon>indigoferoid/millettioid clade</taxon>
        <taxon>Phaseoleae</taxon>
        <taxon>Glycine</taxon>
        <taxon>Glycine subgen. Soja</taxon>
    </lineage>
</organism>
<sequence>MAEQTEKAFLKQPKVFLSTKKTGKGKRPGKGGNRFWKSIGLGFKTPREAIEGTYIDKKCPFTGNVSIRGRILAGTCHSAKMNRTIIVRRNYLHFIKKYQRYEKRHSNIPAHISPAFRVKEGDHVIIGQCRPLSKTVRFNVLKVIPAGSSSGAKKAFTGM</sequence>
<name>RS11_SOYBN</name>
<comment type="similarity">
    <text evidence="1">Belongs to the universal ribosomal protein uS17 family.</text>
</comment>
<protein>
    <recommendedName>
        <fullName evidence="1">Small ribosomal subunit protein uS17</fullName>
    </recommendedName>
    <alternativeName>
        <fullName>40S ribosomal protein S11</fullName>
    </alternativeName>
</protein>
<keyword id="KW-1185">Reference proteome</keyword>
<keyword id="KW-0687">Ribonucleoprotein</keyword>
<keyword id="KW-0689">Ribosomal protein</keyword>
<keyword id="KW-0694">RNA-binding</keyword>
<keyword id="KW-0699">rRNA-binding</keyword>
<evidence type="ECO:0000305" key="1"/>
<gene>
    <name type="primary">RPS11</name>
</gene>